<reference key="1">
    <citation type="submission" date="2006-09" db="EMBL/GenBank/DDBJ databases">
        <title>Complete sequence of chromosome 1 of Shewanella sp. ANA-3.</title>
        <authorList>
            <person name="Copeland A."/>
            <person name="Lucas S."/>
            <person name="Lapidus A."/>
            <person name="Barry K."/>
            <person name="Detter J.C."/>
            <person name="Glavina del Rio T."/>
            <person name="Hammon N."/>
            <person name="Israni S."/>
            <person name="Dalin E."/>
            <person name="Tice H."/>
            <person name="Pitluck S."/>
            <person name="Chertkov O."/>
            <person name="Brettin T."/>
            <person name="Bruce D."/>
            <person name="Han C."/>
            <person name="Tapia R."/>
            <person name="Gilna P."/>
            <person name="Schmutz J."/>
            <person name="Larimer F."/>
            <person name="Land M."/>
            <person name="Hauser L."/>
            <person name="Kyrpides N."/>
            <person name="Kim E."/>
            <person name="Newman D."/>
            <person name="Salticov C."/>
            <person name="Konstantinidis K."/>
            <person name="Klappenback J."/>
            <person name="Tiedje J."/>
            <person name="Richardson P."/>
        </authorList>
    </citation>
    <scope>NUCLEOTIDE SEQUENCE [LARGE SCALE GENOMIC DNA]</scope>
    <source>
        <strain>ANA-3</strain>
    </source>
</reference>
<organism>
    <name type="scientific">Shewanella sp. (strain ANA-3)</name>
    <dbReference type="NCBI Taxonomy" id="94122"/>
    <lineage>
        <taxon>Bacteria</taxon>
        <taxon>Pseudomonadati</taxon>
        <taxon>Pseudomonadota</taxon>
        <taxon>Gammaproteobacteria</taxon>
        <taxon>Alteromonadales</taxon>
        <taxon>Shewanellaceae</taxon>
        <taxon>Shewanella</taxon>
    </lineage>
</organism>
<proteinExistence type="inferred from homology"/>
<feature type="chain" id="PRO_1000068965" description="Cytidine deaminase">
    <location>
        <begin position="1"/>
        <end position="296"/>
    </location>
</feature>
<feature type="domain" description="CMP/dCMP-type deaminase 1" evidence="2">
    <location>
        <begin position="47"/>
        <end position="167"/>
    </location>
</feature>
<feature type="domain" description="CMP/dCMP-type deaminase 2" evidence="2">
    <location>
        <begin position="186"/>
        <end position="296"/>
    </location>
</feature>
<feature type="active site" description="Proton donor" evidence="1">
    <location>
        <position position="103"/>
    </location>
</feature>
<feature type="binding site" evidence="1">
    <location>
        <begin position="88"/>
        <end position="90"/>
    </location>
    <ligand>
        <name>substrate</name>
    </ligand>
</feature>
<feature type="binding site" evidence="1">
    <location>
        <position position="101"/>
    </location>
    <ligand>
        <name>Zn(2+)</name>
        <dbReference type="ChEBI" id="CHEBI:29105"/>
        <note>catalytic</note>
    </ligand>
</feature>
<feature type="binding site" evidence="1">
    <location>
        <position position="128"/>
    </location>
    <ligand>
        <name>Zn(2+)</name>
        <dbReference type="ChEBI" id="CHEBI:29105"/>
        <note>catalytic</note>
    </ligand>
</feature>
<feature type="binding site" evidence="1">
    <location>
        <position position="131"/>
    </location>
    <ligand>
        <name>Zn(2+)</name>
        <dbReference type="ChEBI" id="CHEBI:29105"/>
        <note>catalytic</note>
    </ligand>
</feature>
<comment type="function">
    <text evidence="1">This enzyme scavenges exogenous and endogenous cytidine and 2'-deoxycytidine for UMP synthesis.</text>
</comment>
<comment type="catalytic activity">
    <reaction evidence="1">
        <text>cytidine + H2O + H(+) = uridine + NH4(+)</text>
        <dbReference type="Rhea" id="RHEA:16069"/>
        <dbReference type="ChEBI" id="CHEBI:15377"/>
        <dbReference type="ChEBI" id="CHEBI:15378"/>
        <dbReference type="ChEBI" id="CHEBI:16704"/>
        <dbReference type="ChEBI" id="CHEBI:17562"/>
        <dbReference type="ChEBI" id="CHEBI:28938"/>
        <dbReference type="EC" id="3.5.4.5"/>
    </reaction>
</comment>
<comment type="catalytic activity">
    <reaction evidence="1">
        <text>2'-deoxycytidine + H2O + H(+) = 2'-deoxyuridine + NH4(+)</text>
        <dbReference type="Rhea" id="RHEA:13433"/>
        <dbReference type="ChEBI" id="CHEBI:15377"/>
        <dbReference type="ChEBI" id="CHEBI:15378"/>
        <dbReference type="ChEBI" id="CHEBI:15698"/>
        <dbReference type="ChEBI" id="CHEBI:16450"/>
        <dbReference type="ChEBI" id="CHEBI:28938"/>
        <dbReference type="EC" id="3.5.4.5"/>
    </reaction>
</comment>
<comment type="cofactor">
    <cofactor evidence="1">
        <name>Zn(2+)</name>
        <dbReference type="ChEBI" id="CHEBI:29105"/>
    </cofactor>
    <text evidence="1">Binds 1 zinc ion.</text>
</comment>
<comment type="subunit">
    <text evidence="1">Homodimer.</text>
</comment>
<comment type="similarity">
    <text evidence="1">Belongs to the cytidine and deoxycytidylate deaminase family.</text>
</comment>
<keyword id="KW-0378">Hydrolase</keyword>
<keyword id="KW-0479">Metal-binding</keyword>
<keyword id="KW-0862">Zinc</keyword>
<gene>
    <name evidence="1" type="primary">cdd</name>
    <name type="ordered locus">Shewana3_2573</name>
</gene>
<sequence length="296" mass="32035">MQDRFIKSITQLPTPLADALIPLLHQNFAGHIDAQQLAELVQSSKMTEAEVLLALLPIAAALAKPPISEFYVGAIAKGKSGDIYMGANLELLGEALFHSVHAEQSAISHAWLSGESQIVDMIVNASPCGHCRQFMNELVEGGQIKIHLPSQDSHLLSYYLPYAFGPKDLNVQSPLLVKQETEFALDSSDPMVIEALDHAGLSYAPYTQSYAAVVLETADGATYCGRYAENAAFNPSMLPMQMALSNLTRHNRDFGEIRRAVLVESSQGKISLVGATMDALHAVAAIELEHIVVDPV</sequence>
<protein>
    <recommendedName>
        <fullName evidence="1">Cytidine deaminase</fullName>
        <ecNumber evidence="1">3.5.4.5</ecNumber>
    </recommendedName>
    <alternativeName>
        <fullName evidence="1">Cytidine aminohydrolase</fullName>
        <shortName evidence="1">CDA</shortName>
    </alternativeName>
</protein>
<evidence type="ECO:0000255" key="1">
    <source>
        <dbReference type="HAMAP-Rule" id="MF_01558"/>
    </source>
</evidence>
<evidence type="ECO:0000255" key="2">
    <source>
        <dbReference type="PROSITE-ProRule" id="PRU01083"/>
    </source>
</evidence>
<name>CDD_SHESA</name>
<dbReference type="EC" id="3.5.4.5" evidence="1"/>
<dbReference type="EMBL" id="CP000469">
    <property type="protein sequence ID" value="ABK48800.1"/>
    <property type="molecule type" value="Genomic_DNA"/>
</dbReference>
<dbReference type="RefSeq" id="WP_011717474.1">
    <property type="nucleotide sequence ID" value="NC_008577.1"/>
</dbReference>
<dbReference type="SMR" id="A0KYD1"/>
<dbReference type="STRING" id="94122.Shewana3_2573"/>
<dbReference type="KEGG" id="shn:Shewana3_2573"/>
<dbReference type="eggNOG" id="COG0295">
    <property type="taxonomic scope" value="Bacteria"/>
</dbReference>
<dbReference type="HOGENOM" id="CLU_052424_0_0_6"/>
<dbReference type="OrthoDB" id="9795347at2"/>
<dbReference type="Proteomes" id="UP000002589">
    <property type="component" value="Chromosome"/>
</dbReference>
<dbReference type="GO" id="GO:0005829">
    <property type="term" value="C:cytosol"/>
    <property type="evidence" value="ECO:0007669"/>
    <property type="project" value="TreeGrafter"/>
</dbReference>
<dbReference type="GO" id="GO:0004126">
    <property type="term" value="F:cytidine deaminase activity"/>
    <property type="evidence" value="ECO:0007669"/>
    <property type="project" value="UniProtKB-UniRule"/>
</dbReference>
<dbReference type="GO" id="GO:0042802">
    <property type="term" value="F:identical protein binding"/>
    <property type="evidence" value="ECO:0007669"/>
    <property type="project" value="UniProtKB-ARBA"/>
</dbReference>
<dbReference type="GO" id="GO:0008270">
    <property type="term" value="F:zinc ion binding"/>
    <property type="evidence" value="ECO:0007669"/>
    <property type="project" value="UniProtKB-UniRule"/>
</dbReference>
<dbReference type="GO" id="GO:0009972">
    <property type="term" value="P:cytidine deamination"/>
    <property type="evidence" value="ECO:0007669"/>
    <property type="project" value="InterPro"/>
</dbReference>
<dbReference type="CDD" id="cd01283">
    <property type="entry name" value="cytidine_deaminase"/>
    <property type="match status" value="1"/>
</dbReference>
<dbReference type="FunFam" id="3.40.140.10:FF:000007">
    <property type="entry name" value="Cytidine deaminase"/>
    <property type="match status" value="1"/>
</dbReference>
<dbReference type="FunFam" id="3.40.140.10:FF:000144">
    <property type="entry name" value="Cytidine deaminase"/>
    <property type="match status" value="1"/>
</dbReference>
<dbReference type="Gene3D" id="3.40.140.10">
    <property type="entry name" value="Cytidine Deaminase, domain 2"/>
    <property type="match status" value="2"/>
</dbReference>
<dbReference type="HAMAP" id="MF_01558">
    <property type="entry name" value="Cyt_deam"/>
    <property type="match status" value="1"/>
</dbReference>
<dbReference type="InterPro" id="IPR016192">
    <property type="entry name" value="APOBEC/CMP_deaminase_Zn-bd"/>
</dbReference>
<dbReference type="InterPro" id="IPR002125">
    <property type="entry name" value="CMP_dCMP_dom"/>
</dbReference>
<dbReference type="InterPro" id="IPR013171">
    <property type="entry name" value="Cyd/dCyd_deaminase_Zn-bd"/>
</dbReference>
<dbReference type="InterPro" id="IPR050202">
    <property type="entry name" value="Cyt/Deoxycyt_deaminase"/>
</dbReference>
<dbReference type="InterPro" id="IPR016193">
    <property type="entry name" value="Cytidine_deaminase-like"/>
</dbReference>
<dbReference type="InterPro" id="IPR020797">
    <property type="entry name" value="Cytidine_deaminase_bacteria"/>
</dbReference>
<dbReference type="NCBIfam" id="NF006537">
    <property type="entry name" value="PRK09027.1"/>
    <property type="match status" value="1"/>
</dbReference>
<dbReference type="PANTHER" id="PTHR11644">
    <property type="entry name" value="CYTIDINE DEAMINASE"/>
    <property type="match status" value="1"/>
</dbReference>
<dbReference type="PANTHER" id="PTHR11644:SF2">
    <property type="entry name" value="CYTIDINE DEAMINASE"/>
    <property type="match status" value="1"/>
</dbReference>
<dbReference type="Pfam" id="PF00383">
    <property type="entry name" value="dCMP_cyt_deam_1"/>
    <property type="match status" value="1"/>
</dbReference>
<dbReference type="Pfam" id="PF08211">
    <property type="entry name" value="dCMP_cyt_deam_2"/>
    <property type="match status" value="1"/>
</dbReference>
<dbReference type="PIRSF" id="PIRSF006334">
    <property type="entry name" value="Cdd_plus_pseudo"/>
    <property type="match status" value="1"/>
</dbReference>
<dbReference type="SUPFAM" id="SSF53927">
    <property type="entry name" value="Cytidine deaminase-like"/>
    <property type="match status" value="2"/>
</dbReference>
<dbReference type="PROSITE" id="PS00903">
    <property type="entry name" value="CYT_DCMP_DEAMINASES_1"/>
    <property type="match status" value="1"/>
</dbReference>
<dbReference type="PROSITE" id="PS51747">
    <property type="entry name" value="CYT_DCMP_DEAMINASES_2"/>
    <property type="match status" value="2"/>
</dbReference>
<accession>A0KYD1</accession>